<keyword id="KW-0004">4Fe-4S</keyword>
<keyword id="KW-0342">GTP-binding</keyword>
<keyword id="KW-0408">Iron</keyword>
<keyword id="KW-0411">Iron-sulfur</keyword>
<keyword id="KW-0456">Lyase</keyword>
<keyword id="KW-0479">Metal-binding</keyword>
<keyword id="KW-0501">Molybdenum cofactor biosynthesis</keyword>
<keyword id="KW-0547">Nucleotide-binding</keyword>
<keyword id="KW-1185">Reference proteome</keyword>
<keyword id="KW-0949">S-adenosyl-L-methionine</keyword>
<feature type="chain" id="PRO_0000153016" description="Probable GTP 3',8-cyclase">
    <location>
        <begin position="1"/>
        <end position="334"/>
    </location>
</feature>
<feature type="domain" description="Radical SAM core" evidence="2">
    <location>
        <begin position="24"/>
        <end position="256"/>
    </location>
</feature>
<feature type="binding site" evidence="1">
    <location>
        <position position="33"/>
    </location>
    <ligand>
        <name>GTP</name>
        <dbReference type="ChEBI" id="CHEBI:37565"/>
    </ligand>
</feature>
<feature type="binding site" evidence="1">
    <location>
        <position position="40"/>
    </location>
    <ligand>
        <name>[4Fe-4S] cluster</name>
        <dbReference type="ChEBI" id="CHEBI:49883"/>
        <label>1</label>
        <note>4Fe-4S-S-AdoMet</note>
    </ligand>
</feature>
<feature type="binding site" evidence="1">
    <location>
        <position position="44"/>
    </location>
    <ligand>
        <name>[4Fe-4S] cluster</name>
        <dbReference type="ChEBI" id="CHEBI:49883"/>
        <label>1</label>
        <note>4Fe-4S-S-AdoMet</note>
    </ligand>
</feature>
<feature type="binding site" evidence="1">
    <location>
        <position position="46"/>
    </location>
    <ligand>
        <name>S-adenosyl-L-methionine</name>
        <dbReference type="ChEBI" id="CHEBI:59789"/>
    </ligand>
</feature>
<feature type="binding site" evidence="1">
    <location>
        <position position="47"/>
    </location>
    <ligand>
        <name>[4Fe-4S] cluster</name>
        <dbReference type="ChEBI" id="CHEBI:49883"/>
        <label>1</label>
        <note>4Fe-4S-S-AdoMet</note>
    </ligand>
</feature>
<feature type="binding site" evidence="1">
    <location>
        <position position="85"/>
    </location>
    <ligand>
        <name>GTP</name>
        <dbReference type="ChEBI" id="CHEBI:37565"/>
    </ligand>
</feature>
<feature type="binding site" evidence="1">
    <location>
        <position position="89"/>
    </location>
    <ligand>
        <name>S-adenosyl-L-methionine</name>
        <dbReference type="ChEBI" id="CHEBI:59789"/>
    </ligand>
</feature>
<feature type="binding site" evidence="1">
    <location>
        <position position="113"/>
    </location>
    <ligand>
        <name>GTP</name>
        <dbReference type="ChEBI" id="CHEBI:37565"/>
    </ligand>
</feature>
<feature type="binding site" evidence="1">
    <location>
        <position position="137"/>
    </location>
    <ligand>
        <name>S-adenosyl-L-methionine</name>
        <dbReference type="ChEBI" id="CHEBI:59789"/>
    </ligand>
</feature>
<feature type="binding site" evidence="1">
    <location>
        <position position="176"/>
    </location>
    <ligand>
        <name>GTP</name>
        <dbReference type="ChEBI" id="CHEBI:37565"/>
    </ligand>
</feature>
<feature type="binding site" evidence="1">
    <location>
        <position position="269"/>
    </location>
    <ligand>
        <name>[4Fe-4S] cluster</name>
        <dbReference type="ChEBI" id="CHEBI:49883"/>
        <label>2</label>
        <note>4Fe-4S-substrate</note>
    </ligand>
</feature>
<feature type="binding site" evidence="1">
    <location>
        <position position="272"/>
    </location>
    <ligand>
        <name>[4Fe-4S] cluster</name>
        <dbReference type="ChEBI" id="CHEBI:49883"/>
        <label>2</label>
        <note>4Fe-4S-substrate</note>
    </ligand>
</feature>
<feature type="binding site" evidence="1">
    <location>
        <begin position="274"/>
        <end position="276"/>
    </location>
    <ligand>
        <name>GTP</name>
        <dbReference type="ChEBI" id="CHEBI:37565"/>
    </ligand>
</feature>
<feature type="binding site" evidence="1">
    <location>
        <position position="286"/>
    </location>
    <ligand>
        <name>[4Fe-4S] cluster</name>
        <dbReference type="ChEBI" id="CHEBI:49883"/>
        <label>2</label>
        <note>4Fe-4S-substrate</note>
    </ligand>
</feature>
<dbReference type="EC" id="4.1.99.22" evidence="1"/>
<dbReference type="EMBL" id="AE010299">
    <property type="protein sequence ID" value="AAM03559.1"/>
    <property type="molecule type" value="Genomic_DNA"/>
</dbReference>
<dbReference type="RefSeq" id="WP_011020164.1">
    <property type="nucleotide sequence ID" value="NC_003552.1"/>
</dbReference>
<dbReference type="SMR" id="Q8TUG2"/>
<dbReference type="FunCoup" id="Q8TUG2">
    <property type="interactions" value="131"/>
</dbReference>
<dbReference type="STRING" id="188937.MA_0105"/>
<dbReference type="EnsemblBacteria" id="AAM03559">
    <property type="protein sequence ID" value="AAM03559"/>
    <property type="gene ID" value="MA_0105"/>
</dbReference>
<dbReference type="GeneID" id="1471997"/>
<dbReference type="KEGG" id="mac:MA_0105"/>
<dbReference type="HOGENOM" id="CLU_009273_0_1_2"/>
<dbReference type="InParanoid" id="Q8TUG2"/>
<dbReference type="OrthoDB" id="6925at2157"/>
<dbReference type="PhylomeDB" id="Q8TUG2"/>
<dbReference type="UniPathway" id="UPA00344"/>
<dbReference type="Proteomes" id="UP000002487">
    <property type="component" value="Chromosome"/>
</dbReference>
<dbReference type="GO" id="GO:0051539">
    <property type="term" value="F:4 iron, 4 sulfur cluster binding"/>
    <property type="evidence" value="ECO:0007669"/>
    <property type="project" value="UniProtKB-UniRule"/>
</dbReference>
<dbReference type="GO" id="GO:0061799">
    <property type="term" value="F:cyclic pyranopterin monophosphate synthase activity"/>
    <property type="evidence" value="ECO:0000318"/>
    <property type="project" value="GO_Central"/>
</dbReference>
<dbReference type="GO" id="GO:0061798">
    <property type="term" value="F:GTP 3',8'-cyclase activity"/>
    <property type="evidence" value="ECO:0000318"/>
    <property type="project" value="GO_Central"/>
</dbReference>
<dbReference type="GO" id="GO:0005525">
    <property type="term" value="F:GTP binding"/>
    <property type="evidence" value="ECO:0007669"/>
    <property type="project" value="UniProtKB-UniRule"/>
</dbReference>
<dbReference type="GO" id="GO:0046872">
    <property type="term" value="F:metal ion binding"/>
    <property type="evidence" value="ECO:0007669"/>
    <property type="project" value="UniProtKB-KW"/>
</dbReference>
<dbReference type="GO" id="GO:1904047">
    <property type="term" value="F:S-adenosyl-L-methionine binding"/>
    <property type="evidence" value="ECO:0007669"/>
    <property type="project" value="UniProtKB-UniRule"/>
</dbReference>
<dbReference type="GO" id="GO:0006777">
    <property type="term" value="P:Mo-molybdopterin cofactor biosynthetic process"/>
    <property type="evidence" value="ECO:0000318"/>
    <property type="project" value="GO_Central"/>
</dbReference>
<dbReference type="CDD" id="cd01335">
    <property type="entry name" value="Radical_SAM"/>
    <property type="match status" value="1"/>
</dbReference>
<dbReference type="CDD" id="cd21117">
    <property type="entry name" value="Twitch_MoaA"/>
    <property type="match status" value="1"/>
</dbReference>
<dbReference type="Gene3D" id="3.20.20.70">
    <property type="entry name" value="Aldolase class I"/>
    <property type="match status" value="1"/>
</dbReference>
<dbReference type="HAMAP" id="MF_01225_A">
    <property type="entry name" value="MoaA_A"/>
    <property type="match status" value="1"/>
</dbReference>
<dbReference type="InterPro" id="IPR013785">
    <property type="entry name" value="Aldolase_TIM"/>
</dbReference>
<dbReference type="InterPro" id="IPR006638">
    <property type="entry name" value="Elp3/MiaA/NifB-like_rSAM"/>
</dbReference>
<dbReference type="InterPro" id="IPR013485">
    <property type="entry name" value="MoaA_arc"/>
</dbReference>
<dbReference type="InterPro" id="IPR000385">
    <property type="entry name" value="MoaA_NifB_PqqE_Fe-S-bd_CS"/>
</dbReference>
<dbReference type="InterPro" id="IPR010505">
    <property type="entry name" value="MoaA_twitch"/>
</dbReference>
<dbReference type="InterPro" id="IPR050105">
    <property type="entry name" value="MoCo_biosynth_MoaA/MoaC"/>
</dbReference>
<dbReference type="InterPro" id="IPR007197">
    <property type="entry name" value="rSAM"/>
</dbReference>
<dbReference type="NCBIfam" id="TIGR02668">
    <property type="entry name" value="moaA_archaeal"/>
    <property type="match status" value="1"/>
</dbReference>
<dbReference type="NCBIfam" id="NF001199">
    <property type="entry name" value="PRK00164.2-1"/>
    <property type="match status" value="1"/>
</dbReference>
<dbReference type="PANTHER" id="PTHR22960:SF0">
    <property type="entry name" value="MOLYBDENUM COFACTOR BIOSYNTHESIS PROTEIN 1"/>
    <property type="match status" value="1"/>
</dbReference>
<dbReference type="PANTHER" id="PTHR22960">
    <property type="entry name" value="MOLYBDOPTERIN COFACTOR SYNTHESIS PROTEIN A"/>
    <property type="match status" value="1"/>
</dbReference>
<dbReference type="Pfam" id="PF13353">
    <property type="entry name" value="Fer4_12"/>
    <property type="match status" value="1"/>
</dbReference>
<dbReference type="Pfam" id="PF06463">
    <property type="entry name" value="Mob_synth_C"/>
    <property type="match status" value="1"/>
</dbReference>
<dbReference type="Pfam" id="PF04055">
    <property type="entry name" value="Radical_SAM"/>
    <property type="match status" value="1"/>
</dbReference>
<dbReference type="SFLD" id="SFLDG01383">
    <property type="entry name" value="cyclic_pyranopterin_phosphate"/>
    <property type="match status" value="1"/>
</dbReference>
<dbReference type="SFLD" id="SFLDS00029">
    <property type="entry name" value="Radical_SAM"/>
    <property type="match status" value="1"/>
</dbReference>
<dbReference type="SMART" id="SM00729">
    <property type="entry name" value="Elp3"/>
    <property type="match status" value="1"/>
</dbReference>
<dbReference type="SUPFAM" id="SSF102114">
    <property type="entry name" value="Radical SAM enzymes"/>
    <property type="match status" value="1"/>
</dbReference>
<dbReference type="PROSITE" id="PS01305">
    <property type="entry name" value="MOAA_NIFB_PQQE"/>
    <property type="match status" value="1"/>
</dbReference>
<dbReference type="PROSITE" id="PS51918">
    <property type="entry name" value="RADICAL_SAM"/>
    <property type="match status" value="1"/>
</dbReference>
<reference key="1">
    <citation type="journal article" date="2002" name="Genome Res.">
        <title>The genome of Methanosarcina acetivorans reveals extensive metabolic and physiological diversity.</title>
        <authorList>
            <person name="Galagan J.E."/>
            <person name="Nusbaum C."/>
            <person name="Roy A."/>
            <person name="Endrizzi M.G."/>
            <person name="Macdonald P."/>
            <person name="FitzHugh W."/>
            <person name="Calvo S."/>
            <person name="Engels R."/>
            <person name="Smirnov S."/>
            <person name="Atnoor D."/>
            <person name="Brown A."/>
            <person name="Allen N."/>
            <person name="Naylor J."/>
            <person name="Stange-Thomann N."/>
            <person name="DeArellano K."/>
            <person name="Johnson R."/>
            <person name="Linton L."/>
            <person name="McEwan P."/>
            <person name="McKernan K."/>
            <person name="Talamas J."/>
            <person name="Tirrell A."/>
            <person name="Ye W."/>
            <person name="Zimmer A."/>
            <person name="Barber R.D."/>
            <person name="Cann I."/>
            <person name="Graham D.E."/>
            <person name="Grahame D.A."/>
            <person name="Guss A.M."/>
            <person name="Hedderich R."/>
            <person name="Ingram-Smith C."/>
            <person name="Kuettner H.C."/>
            <person name="Krzycki J.A."/>
            <person name="Leigh J.A."/>
            <person name="Li W."/>
            <person name="Liu J."/>
            <person name="Mukhopadhyay B."/>
            <person name="Reeve J.N."/>
            <person name="Smith K."/>
            <person name="Springer T.A."/>
            <person name="Umayam L.A."/>
            <person name="White O."/>
            <person name="White R.H."/>
            <person name="de Macario E.C."/>
            <person name="Ferry J.G."/>
            <person name="Jarrell K.F."/>
            <person name="Jing H."/>
            <person name="Macario A.J.L."/>
            <person name="Paulsen I.T."/>
            <person name="Pritchett M."/>
            <person name="Sowers K.R."/>
            <person name="Swanson R.V."/>
            <person name="Zinder S.H."/>
            <person name="Lander E."/>
            <person name="Metcalf W.W."/>
            <person name="Birren B."/>
        </authorList>
    </citation>
    <scope>NUCLEOTIDE SEQUENCE [LARGE SCALE GENOMIC DNA]</scope>
    <source>
        <strain>ATCC 35395 / DSM 2834 / JCM 12185 / C2A</strain>
    </source>
</reference>
<gene>
    <name evidence="1" type="primary">moaA</name>
    <name type="ordered locus">MA_0105</name>
</gene>
<name>MOAA_METAC</name>
<evidence type="ECO:0000255" key="1">
    <source>
        <dbReference type="HAMAP-Rule" id="MF_01225"/>
    </source>
</evidence>
<evidence type="ECO:0000255" key="2">
    <source>
        <dbReference type="PROSITE-ProRule" id="PRU01266"/>
    </source>
</evidence>
<comment type="function">
    <text evidence="1">Catalyzes the cyclization of GTP to (8S)-3',8-cyclo-7,8-dihydroguanosine 5'-triphosphate.</text>
</comment>
<comment type="catalytic activity">
    <reaction evidence="1">
        <text>GTP + AH2 + S-adenosyl-L-methionine = (8S)-3',8-cyclo-7,8-dihydroguanosine 5'-triphosphate + 5'-deoxyadenosine + L-methionine + A + H(+)</text>
        <dbReference type="Rhea" id="RHEA:49576"/>
        <dbReference type="ChEBI" id="CHEBI:13193"/>
        <dbReference type="ChEBI" id="CHEBI:15378"/>
        <dbReference type="ChEBI" id="CHEBI:17319"/>
        <dbReference type="ChEBI" id="CHEBI:17499"/>
        <dbReference type="ChEBI" id="CHEBI:37565"/>
        <dbReference type="ChEBI" id="CHEBI:57844"/>
        <dbReference type="ChEBI" id="CHEBI:59789"/>
        <dbReference type="ChEBI" id="CHEBI:131766"/>
        <dbReference type="EC" id="4.1.99.22"/>
    </reaction>
</comment>
<comment type="cofactor">
    <cofactor evidence="1">
        <name>[4Fe-4S] cluster</name>
        <dbReference type="ChEBI" id="CHEBI:49883"/>
    </cofactor>
    <text evidence="1">Binds 2 [4Fe-4S] clusters. Binds 1 [4Fe-4S] cluster coordinated with 3 cysteines and an exchangeable S-adenosyl-L-methionine and 1 [4Fe-4S] cluster coordinated with 3 cysteines and the GTP-derived substrate.</text>
</comment>
<comment type="pathway">
    <text evidence="1">Cofactor biosynthesis; molybdopterin biosynthesis.</text>
</comment>
<comment type="similarity">
    <text evidence="1">Belongs to the radical SAM superfamily. MoaA family.</text>
</comment>
<sequence length="334" mass="37415">MKNNNSGKTSLYPEEKEEKILVDPYGRKVTGLRISITDRCNLSCMYCHNEGADCCSCGSLGHEMSPELICGIVREAAKFGVRKVKFSGGEPLFRKDFEEILACLPPLKEVSATTNGILLEKRAKTLKAAGLDRVNVSLDSLNPEKYGKITGAPPGTLEKVIKGIDSAVEAGLTPVKLNMVLLKGVNDNEIDAMMEFIRPYGGKVILQLIELMNIDPQLSKYMIDSKALEKILEERASEVRVRHLHHRKKYIIDGVEVEFVRPMDNSEFCAHCSRLRVTADGKFKPCLLVHDNLVDVREAKSPKEIEKLLRLAVSRRKPYYIPATGVTKLEKWQE</sequence>
<organism>
    <name type="scientific">Methanosarcina acetivorans (strain ATCC 35395 / DSM 2834 / JCM 12185 / C2A)</name>
    <dbReference type="NCBI Taxonomy" id="188937"/>
    <lineage>
        <taxon>Archaea</taxon>
        <taxon>Methanobacteriati</taxon>
        <taxon>Methanobacteriota</taxon>
        <taxon>Stenosarchaea group</taxon>
        <taxon>Methanomicrobia</taxon>
        <taxon>Methanosarcinales</taxon>
        <taxon>Methanosarcinaceae</taxon>
        <taxon>Methanosarcina</taxon>
    </lineage>
</organism>
<proteinExistence type="inferred from homology"/>
<accession>Q8TUG2</accession>
<protein>
    <recommendedName>
        <fullName evidence="1">Probable GTP 3',8-cyclase</fullName>
        <ecNumber evidence="1">4.1.99.22</ecNumber>
    </recommendedName>
    <alternativeName>
        <fullName evidence="1">Molybdenum cofactor biosynthesis protein A</fullName>
    </alternativeName>
</protein>